<keyword id="KW-0025">Alternative splicing</keyword>
<keyword id="KW-0965">Cell junction</keyword>
<keyword id="KW-1003">Cell membrane</keyword>
<keyword id="KW-0303">Gap junction</keyword>
<keyword id="KW-0407">Ion channel</keyword>
<keyword id="KW-0406">Ion transport</keyword>
<keyword id="KW-0472">Membrane</keyword>
<keyword id="KW-1185">Reference proteome</keyword>
<keyword id="KW-0812">Transmembrane</keyword>
<keyword id="KW-1133">Transmembrane helix</keyword>
<keyword id="KW-0813">Transport</keyword>
<evidence type="ECO:0000250" key="1"/>
<evidence type="ECO:0000250" key="2">
    <source>
        <dbReference type="UniProtKB" id="O61715"/>
    </source>
</evidence>
<evidence type="ECO:0000255" key="3">
    <source>
        <dbReference type="PROSITE-ProRule" id="PRU00351"/>
    </source>
</evidence>
<evidence type="ECO:0000305" key="4"/>
<name>INX14_CAEEL</name>
<organism>
    <name type="scientific">Caenorhabditis elegans</name>
    <dbReference type="NCBI Taxonomy" id="6239"/>
    <lineage>
        <taxon>Eukaryota</taxon>
        <taxon>Metazoa</taxon>
        <taxon>Ecdysozoa</taxon>
        <taxon>Nematoda</taxon>
        <taxon>Chromadorea</taxon>
        <taxon>Rhabditida</taxon>
        <taxon>Rhabditina</taxon>
        <taxon>Rhabditomorpha</taxon>
        <taxon>Rhabditoidea</taxon>
        <taxon>Rhabditidae</taxon>
        <taxon>Peloderinae</taxon>
        <taxon>Caenorhabditis</taxon>
    </lineage>
</organism>
<gene>
    <name type="primary">inx-14</name>
    <name type="synonym">opu-14</name>
    <name type="ORF">F07A5.1</name>
</gene>
<dbReference type="EMBL" id="Z72506">
    <property type="protein sequence ID" value="CAA96621.1"/>
    <property type="molecule type" value="Genomic_DNA"/>
</dbReference>
<dbReference type="EMBL" id="Z72506">
    <property type="protein sequence ID" value="CAA96618.1"/>
    <property type="molecule type" value="Genomic_DNA"/>
</dbReference>
<dbReference type="PIR" id="T20536">
    <property type="entry name" value="T20536"/>
</dbReference>
<dbReference type="PIR" id="T20539">
    <property type="entry name" value="T20539"/>
</dbReference>
<dbReference type="RefSeq" id="NP_492078.1">
    <molecule id="O62136-1"/>
    <property type="nucleotide sequence ID" value="NM_059677.7"/>
</dbReference>
<dbReference type="RefSeq" id="NP_492079.1">
    <molecule id="O62136-2"/>
    <property type="nucleotide sequence ID" value="NM_059678.6"/>
</dbReference>
<dbReference type="BioGRID" id="37930">
    <property type="interactions" value="5"/>
</dbReference>
<dbReference type="DIP" id="DIP-24670N"/>
<dbReference type="FunCoup" id="O62136">
    <property type="interactions" value="149"/>
</dbReference>
<dbReference type="IntAct" id="O62136">
    <property type="interactions" value="1"/>
</dbReference>
<dbReference type="STRING" id="6239.F07A5.1b.1"/>
<dbReference type="TCDB" id="1.A.25.1.6">
    <property type="family name" value="the gap junction-forming innexin (innexin) family"/>
</dbReference>
<dbReference type="PaxDb" id="6239-F07A5.1b"/>
<dbReference type="PeptideAtlas" id="O62136"/>
<dbReference type="EnsemblMetazoa" id="F07A5.1a.1">
    <molecule id="O62136-2"/>
    <property type="protein sequence ID" value="F07A5.1a.1"/>
    <property type="gene ID" value="WBGene00002136"/>
</dbReference>
<dbReference type="EnsemblMetazoa" id="F07A5.1a.2">
    <molecule id="O62136-2"/>
    <property type="protein sequence ID" value="F07A5.1a.2"/>
    <property type="gene ID" value="WBGene00002136"/>
</dbReference>
<dbReference type="EnsemblMetazoa" id="F07A5.1b.1">
    <molecule id="O62136-1"/>
    <property type="protein sequence ID" value="F07A5.1b.1"/>
    <property type="gene ID" value="WBGene00002136"/>
</dbReference>
<dbReference type="GeneID" id="172488"/>
<dbReference type="KEGG" id="cel:CELE_F07A5.1"/>
<dbReference type="UCSC" id="F07A5.1b">
    <molecule id="O62136-1"/>
    <property type="organism name" value="c. elegans"/>
</dbReference>
<dbReference type="AGR" id="WB:WBGene00002136"/>
<dbReference type="CTD" id="172488"/>
<dbReference type="WormBase" id="F07A5.1a">
    <molecule id="O62136-2"/>
    <property type="protein sequence ID" value="CE05554"/>
    <property type="gene ID" value="WBGene00002136"/>
    <property type="gene designation" value="inx-14"/>
</dbReference>
<dbReference type="WormBase" id="F07A5.1b">
    <molecule id="O62136-1"/>
    <property type="protein sequence ID" value="CE17632"/>
    <property type="gene ID" value="WBGene00002136"/>
    <property type="gene designation" value="inx-14"/>
</dbReference>
<dbReference type="eggNOG" id="KOG3883">
    <property type="taxonomic scope" value="Eukaryota"/>
</dbReference>
<dbReference type="InParanoid" id="O62136"/>
<dbReference type="OMA" id="YLCADGI"/>
<dbReference type="OrthoDB" id="5867527at2759"/>
<dbReference type="PhylomeDB" id="O62136"/>
<dbReference type="PRO" id="PR:O62136"/>
<dbReference type="Proteomes" id="UP000001940">
    <property type="component" value="Chromosome I"/>
</dbReference>
<dbReference type="Bgee" id="WBGene00002136">
    <property type="expression patterns" value="Expressed in germ line (C elegans) and 3 other cell types or tissues"/>
</dbReference>
<dbReference type="GO" id="GO:0005921">
    <property type="term" value="C:gap junction"/>
    <property type="evidence" value="ECO:0000314"/>
    <property type="project" value="WormBase"/>
</dbReference>
<dbReference type="GO" id="GO:0005886">
    <property type="term" value="C:plasma membrane"/>
    <property type="evidence" value="ECO:0000250"/>
    <property type="project" value="UniProtKB"/>
</dbReference>
<dbReference type="GO" id="GO:0005243">
    <property type="term" value="F:gap junction channel activity"/>
    <property type="evidence" value="ECO:0000250"/>
    <property type="project" value="UniProtKB"/>
</dbReference>
<dbReference type="GO" id="GO:0055077">
    <property type="term" value="F:gap junction hemi-channel activity"/>
    <property type="evidence" value="ECO:0000250"/>
    <property type="project" value="UniProtKB"/>
</dbReference>
<dbReference type="GO" id="GO:0036093">
    <property type="term" value="P:germ cell proliferation"/>
    <property type="evidence" value="ECO:0000315"/>
    <property type="project" value="WormBase"/>
</dbReference>
<dbReference type="GO" id="GO:0034220">
    <property type="term" value="P:monoatomic ion transmembrane transport"/>
    <property type="evidence" value="ECO:0007669"/>
    <property type="project" value="UniProtKB-KW"/>
</dbReference>
<dbReference type="GO" id="GO:0001556">
    <property type="term" value="P:oocyte maturation"/>
    <property type="evidence" value="ECO:0000315"/>
    <property type="project" value="WormBase"/>
</dbReference>
<dbReference type="InterPro" id="IPR000990">
    <property type="entry name" value="Innexin"/>
</dbReference>
<dbReference type="PANTHER" id="PTHR11893">
    <property type="entry name" value="INNEXIN"/>
    <property type="match status" value="1"/>
</dbReference>
<dbReference type="PANTHER" id="PTHR11893:SF23">
    <property type="entry name" value="INNEXIN-14"/>
    <property type="match status" value="1"/>
</dbReference>
<dbReference type="Pfam" id="PF00876">
    <property type="entry name" value="Innexin"/>
    <property type="match status" value="1"/>
</dbReference>
<dbReference type="PRINTS" id="PR01262">
    <property type="entry name" value="INNEXIN"/>
</dbReference>
<dbReference type="PROSITE" id="PS51013">
    <property type="entry name" value="PANNEXIN"/>
    <property type="match status" value="1"/>
</dbReference>
<comment type="function">
    <text evidence="2">Structural component of the gap junctions.</text>
</comment>
<comment type="subcellular location">
    <subcellularLocation>
        <location evidence="4">Cell membrane</location>
        <topology evidence="3">Multi-pass membrane protein</topology>
    </subcellularLocation>
    <subcellularLocation>
        <location evidence="1">Cell junction</location>
        <location evidence="1">Gap junction</location>
    </subcellularLocation>
</comment>
<comment type="alternative products">
    <event type="alternative splicing"/>
    <isoform>
        <id>O62136-1</id>
        <name>b</name>
        <sequence type="displayed"/>
    </isoform>
    <isoform>
        <id>O62136-2</id>
        <name>a</name>
        <sequence type="described" ref="VSP_002680"/>
    </isoform>
</comment>
<comment type="similarity">
    <text evidence="3">Belongs to the pannexin family.</text>
</comment>
<feature type="chain" id="PRO_0000208514" description="Innexin-14">
    <location>
        <begin position="1"/>
        <end position="434"/>
    </location>
</feature>
<feature type="transmembrane region" description="Helical" evidence="3">
    <location>
        <begin position="30"/>
        <end position="50"/>
    </location>
</feature>
<feature type="transmembrane region" description="Helical" evidence="3">
    <location>
        <begin position="106"/>
        <end position="126"/>
    </location>
</feature>
<feature type="transmembrane region" description="Helical" evidence="3">
    <location>
        <begin position="301"/>
        <end position="321"/>
    </location>
</feature>
<feature type="transmembrane region" description="Helical" evidence="3">
    <location>
        <begin position="365"/>
        <end position="385"/>
    </location>
</feature>
<feature type="splice variant" id="VSP_002680" description="In isoform a." evidence="4">
    <location>
        <begin position="406"/>
        <end position="407"/>
    </location>
</feature>
<accession>O62136</accession>
<accession>Q19139</accession>
<sequence>MIWEIPIIGDFITKPFKAAKLYEFYDRLHLFTVYLLGFFVLLTGAKQHFGNPIDCMLPKQHDDLKSWRDYIHNFCLFYGTFRYDVSNGTSEFGSYTEDASVNYYQWVPFFFAFQVCCFLLPFWCWAYMQKLIYIDMAFIVDYSGKINSEKTFEKTKEKVDRIVNYMHDHFKFRRAHKMGYLSWITFNSAFPSVLYSLTKLFFITNVIIQVNLVCKFLDVDSWTWGFDLLGKFIHPTPRAPEFSSFSDKQRFAAILTDGSYNRFQYFPILVGCEYQLQESVSNFVNHKAQCIIPMNVINEKIFIGLYFWLLVLTALSVIGTVKWILRIKSKKLNEVMIYKLIKKSLEREPFDSNIHDHRYNFVHKYLCADGILLIYFMMDTNGFLKTEEVIGALFKKYCSDAGLEPLQTAPTLTSSPRDLAYSETNYGFAAPQKI</sequence>
<proteinExistence type="inferred from homology"/>
<reference key="1">
    <citation type="journal article" date="1998" name="Science">
        <title>Genome sequence of the nematode C. elegans: a platform for investigating biology.</title>
        <authorList>
            <consortium name="The C. elegans sequencing consortium"/>
        </authorList>
    </citation>
    <scope>NUCLEOTIDE SEQUENCE [LARGE SCALE GENOMIC DNA]</scope>
    <source>
        <strain>Bristol N2</strain>
    </source>
</reference>
<protein>
    <recommendedName>
        <fullName>Innexin-14</fullName>
    </recommendedName>
    <alternativeName>
        <fullName>Protein opu-14</fullName>
    </alternativeName>
</protein>